<dbReference type="EMBL" id="M73547">
    <property type="protein sequence ID" value="AAA60136.1"/>
    <property type="status" value="ALT_INIT"/>
    <property type="molecule type" value="mRNA"/>
</dbReference>
<dbReference type="EMBL" id="M74090">
    <property type="protein sequence ID" value="AAA66351.1"/>
    <property type="status" value="ALT_INIT"/>
    <property type="molecule type" value="mRNA"/>
</dbReference>
<dbReference type="EMBL" id="AY562243">
    <property type="protein sequence ID" value="AAT70688.1"/>
    <property type="molecule type" value="mRNA"/>
</dbReference>
<dbReference type="EMBL" id="AK299902">
    <property type="protein sequence ID" value="BAH13167.1"/>
    <property type="molecule type" value="mRNA"/>
</dbReference>
<dbReference type="EMBL" id="AC008536">
    <property type="status" value="NOT_ANNOTATED_CDS"/>
    <property type="molecule type" value="Genomic_DNA"/>
</dbReference>
<dbReference type="EMBL" id="AC008575">
    <property type="status" value="NOT_ANNOTATED_CDS"/>
    <property type="molecule type" value="Genomic_DNA"/>
</dbReference>
<dbReference type="EMBL" id="CH471086">
    <property type="protein sequence ID" value="EAW48994.1"/>
    <property type="molecule type" value="Genomic_DNA"/>
</dbReference>
<dbReference type="EMBL" id="CH471086">
    <property type="protein sequence ID" value="EAW48995.1"/>
    <property type="molecule type" value="Genomic_DNA"/>
</dbReference>
<dbReference type="EMBL" id="BC000232">
    <property type="protein sequence ID" value="AAH00232.2"/>
    <property type="molecule type" value="mRNA"/>
</dbReference>
<dbReference type="EMBL" id="BC065926">
    <property type="protein sequence ID" value="AAH65926.1"/>
    <property type="status" value="ALT_INIT"/>
    <property type="molecule type" value="mRNA"/>
</dbReference>
<dbReference type="CCDS" id="CCDS4109.2">
    <molecule id="Q00765-1"/>
</dbReference>
<dbReference type="PIR" id="A39658">
    <property type="entry name" value="A39658"/>
</dbReference>
<dbReference type="RefSeq" id="NP_005660.4">
    <molecule id="Q00765-1"/>
    <property type="nucleotide sequence ID" value="NM_005669.4"/>
</dbReference>
<dbReference type="BioGRID" id="113637">
    <property type="interactions" value="394"/>
</dbReference>
<dbReference type="CORUM" id="Q00765"/>
<dbReference type="FunCoup" id="Q00765">
    <property type="interactions" value="1302"/>
</dbReference>
<dbReference type="IntAct" id="Q00765">
    <property type="interactions" value="163"/>
</dbReference>
<dbReference type="MINT" id="Q00765"/>
<dbReference type="STRING" id="9606.ENSP00000368959"/>
<dbReference type="ChEMBL" id="CHEMBL4295797"/>
<dbReference type="GlyGen" id="Q00765">
    <property type="glycosylation" value="1 site, 1 O-linked glycan (1 site)"/>
</dbReference>
<dbReference type="iPTMnet" id="Q00765"/>
<dbReference type="PhosphoSitePlus" id="Q00765"/>
<dbReference type="SwissPalm" id="Q00765"/>
<dbReference type="BioMuta" id="REEP5"/>
<dbReference type="DMDM" id="82654932"/>
<dbReference type="jPOST" id="Q00765"/>
<dbReference type="MassIVE" id="Q00765"/>
<dbReference type="PaxDb" id="9606-ENSP00000368959"/>
<dbReference type="PeptideAtlas" id="Q00765"/>
<dbReference type="ProteomicsDB" id="57872">
    <molecule id="Q00765-1"/>
</dbReference>
<dbReference type="ProteomicsDB" id="6755"/>
<dbReference type="Pumba" id="Q00765"/>
<dbReference type="TopDownProteomics" id="Q00765-1">
    <molecule id="Q00765-1"/>
</dbReference>
<dbReference type="Antibodypedia" id="25369">
    <property type="antibodies" value="292 antibodies from 30 providers"/>
</dbReference>
<dbReference type="DNASU" id="7905"/>
<dbReference type="Ensembl" id="ENST00000379638.9">
    <molecule id="Q00765-1"/>
    <property type="protein sequence ID" value="ENSP00000368959.4"/>
    <property type="gene ID" value="ENSG00000129625.13"/>
</dbReference>
<dbReference type="GeneID" id="7905"/>
<dbReference type="KEGG" id="hsa:7905"/>
<dbReference type="MANE-Select" id="ENST00000379638.9">
    <property type="protein sequence ID" value="ENSP00000368959.4"/>
    <property type="RefSeq nucleotide sequence ID" value="NM_005669.5"/>
    <property type="RefSeq protein sequence ID" value="NP_005660.4"/>
</dbReference>
<dbReference type="UCSC" id="uc003kqe.2">
    <molecule id="Q00765-1"/>
    <property type="organism name" value="human"/>
</dbReference>
<dbReference type="AGR" id="HGNC:30077"/>
<dbReference type="CTD" id="7905"/>
<dbReference type="DisGeNET" id="7905"/>
<dbReference type="GeneCards" id="REEP5"/>
<dbReference type="HGNC" id="HGNC:30077">
    <property type="gene designation" value="REEP5"/>
</dbReference>
<dbReference type="HPA" id="ENSG00000129625">
    <property type="expression patterns" value="Low tissue specificity"/>
</dbReference>
<dbReference type="MIM" id="125265">
    <property type="type" value="gene"/>
</dbReference>
<dbReference type="neXtProt" id="NX_Q00765"/>
<dbReference type="OpenTargets" id="ENSG00000129625"/>
<dbReference type="PharmGKB" id="PA134882361"/>
<dbReference type="VEuPathDB" id="HostDB:ENSG00000129625"/>
<dbReference type="eggNOG" id="KOG1725">
    <property type="taxonomic scope" value="Eukaryota"/>
</dbReference>
<dbReference type="GeneTree" id="ENSGT00940000157873"/>
<dbReference type="InParanoid" id="Q00765"/>
<dbReference type="OMA" id="DTQYWVV"/>
<dbReference type="OrthoDB" id="10009287at2759"/>
<dbReference type="PAN-GO" id="Q00765">
    <property type="GO annotations" value="0 GO annotations based on evolutionary models"/>
</dbReference>
<dbReference type="PhylomeDB" id="Q00765"/>
<dbReference type="TreeFam" id="TF314913"/>
<dbReference type="PathwayCommons" id="Q00765"/>
<dbReference type="SignaLink" id="Q00765"/>
<dbReference type="SIGNOR" id="Q00765"/>
<dbReference type="BioGRID-ORCS" id="7905">
    <property type="hits" value="14 hits in 1162 CRISPR screens"/>
</dbReference>
<dbReference type="CD-CODE" id="FB4E32DD">
    <property type="entry name" value="Presynaptic clusters and postsynaptic densities"/>
</dbReference>
<dbReference type="ChiTaRS" id="REEP5">
    <property type="organism name" value="human"/>
</dbReference>
<dbReference type="GeneWiki" id="REEP5"/>
<dbReference type="GenomeRNAi" id="7905"/>
<dbReference type="Pharos" id="Q00765">
    <property type="development level" value="Tbio"/>
</dbReference>
<dbReference type="PRO" id="PR:Q00765"/>
<dbReference type="Proteomes" id="UP000005640">
    <property type="component" value="Chromosome 5"/>
</dbReference>
<dbReference type="RNAct" id="Q00765">
    <property type="molecule type" value="protein"/>
</dbReference>
<dbReference type="Bgee" id="ENSG00000129625">
    <property type="expression patterns" value="Expressed in middle temporal gyrus and 214 other cell types or tissues"/>
</dbReference>
<dbReference type="ExpressionAtlas" id="Q00765">
    <property type="expression patterns" value="baseline and differential"/>
</dbReference>
<dbReference type="GO" id="GO:0005783">
    <property type="term" value="C:endoplasmic reticulum"/>
    <property type="evidence" value="ECO:0000314"/>
    <property type="project" value="HPA"/>
</dbReference>
<dbReference type="GO" id="GO:0071782">
    <property type="term" value="C:endoplasmic reticulum tubular network"/>
    <property type="evidence" value="ECO:0000314"/>
    <property type="project" value="UniProtKB"/>
</dbReference>
<dbReference type="GO" id="GO:0033017">
    <property type="term" value="C:sarcoplasmic reticulum membrane"/>
    <property type="evidence" value="ECO:0007669"/>
    <property type="project" value="UniProtKB-SubCell"/>
</dbReference>
<dbReference type="GO" id="GO:0090158">
    <property type="term" value="P:endoplasmic reticulum membrane organization"/>
    <property type="evidence" value="ECO:0000250"/>
    <property type="project" value="UniProtKB"/>
</dbReference>
<dbReference type="GO" id="GO:0007029">
    <property type="term" value="P:endoplasmic reticulum organization"/>
    <property type="evidence" value="ECO:0000250"/>
    <property type="project" value="FlyBase"/>
</dbReference>
<dbReference type="GO" id="GO:0032386">
    <property type="term" value="P:regulation of intracellular transport"/>
    <property type="evidence" value="ECO:0000250"/>
    <property type="project" value="FlyBase"/>
</dbReference>
<dbReference type="InterPro" id="IPR004345">
    <property type="entry name" value="TB2_DP1_HVA22"/>
</dbReference>
<dbReference type="PANTHER" id="PTHR12300">
    <property type="entry name" value="HVA22-LIKE PROTEINS"/>
    <property type="match status" value="1"/>
</dbReference>
<dbReference type="PANTHER" id="PTHR12300:SF93">
    <property type="entry name" value="RECEPTOR EXPRESSION-ENHANCING PROTEIN 5"/>
    <property type="match status" value="1"/>
</dbReference>
<dbReference type="Pfam" id="PF03134">
    <property type="entry name" value="TB2_DP1_HVA22"/>
    <property type="match status" value="1"/>
</dbReference>
<organism>
    <name type="scientific">Homo sapiens</name>
    <name type="common">Human</name>
    <dbReference type="NCBI Taxonomy" id="9606"/>
    <lineage>
        <taxon>Eukaryota</taxon>
        <taxon>Metazoa</taxon>
        <taxon>Chordata</taxon>
        <taxon>Craniata</taxon>
        <taxon>Vertebrata</taxon>
        <taxon>Euteleostomi</taxon>
        <taxon>Mammalia</taxon>
        <taxon>Eutheria</taxon>
        <taxon>Euarchontoglires</taxon>
        <taxon>Primates</taxon>
        <taxon>Haplorrhini</taxon>
        <taxon>Catarrhini</taxon>
        <taxon>Hominidae</taxon>
        <taxon>Homo</taxon>
    </lineage>
</organism>
<evidence type="ECO:0000250" key="1">
    <source>
        <dbReference type="UniProtKB" id="Q60870"/>
    </source>
</evidence>
<evidence type="ECO:0000255" key="2"/>
<evidence type="ECO:0000269" key="3">
    <source>
    </source>
</evidence>
<evidence type="ECO:0000269" key="4">
    <source>
    </source>
</evidence>
<evidence type="ECO:0000269" key="5">
    <source>
    </source>
</evidence>
<evidence type="ECO:0000269" key="6">
    <source>
    </source>
</evidence>
<evidence type="ECO:0000303" key="7">
    <source>
    </source>
</evidence>
<evidence type="ECO:0000305" key="8"/>
<evidence type="ECO:0000305" key="9">
    <source>
    </source>
</evidence>
<sequence>MSAAMRERFDRFLHEKNCMTDLLAKLEAKTGVNRSFIALGVIGLVALYLVFGYGASLLCNLIGFGYPAYISIKAIESPNKEDDTQWLTYWVVYGVFSIAEFFSDIFLSWFPFYYMLKCGFLLWCMAPSPSNGAELLYKRIIRPFFLKHESQMDSVVKDLKDKAKETADAITKEAKKATVNLLGEEKKST</sequence>
<name>REEP5_HUMAN</name>
<reference key="1">
    <citation type="journal article" date="1991" name="Cell">
        <title>Identification of deletion mutations and three new genes at the familial polyposis locus.</title>
        <authorList>
            <person name="Joslyn G."/>
            <person name="Carlson M."/>
            <person name="Thliveris A."/>
            <person name="Albertsen H."/>
            <person name="Gelbert L."/>
            <person name="Samowitz W."/>
            <person name="Groden J."/>
            <person name="Stevens J."/>
            <person name="Spirio L."/>
            <person name="Robertson M."/>
            <person name="Sargeant L."/>
            <person name="Krapcho K."/>
            <person name="Wolff E."/>
            <person name="Burt R."/>
            <person name="Hughes J.P."/>
            <person name="Warrington J."/>
            <person name="McPherson J.D."/>
            <person name="Wasmuth J.J."/>
            <person name="le Paslier D."/>
            <person name="Abderrahim H."/>
            <person name="Cohen D."/>
            <person name="Leppert M."/>
            <person name="White R."/>
        </authorList>
    </citation>
    <scope>NUCLEOTIDE SEQUENCE [MRNA] (ISOFORM 1)</scope>
</reference>
<reference key="2">
    <citation type="journal article" date="1991" name="Science">
        <title>Identification of FAP locus genes from chromosome 5q21.</title>
        <authorList>
            <person name="Kinzler K.W."/>
            <person name="Nilbert M.C."/>
            <person name="Su L.-K."/>
            <person name="Vogelstein B."/>
            <person name="Bryan T.M."/>
            <person name="Levy D.B."/>
            <person name="Smith K.J."/>
            <person name="Preisinger A.C."/>
            <person name="Hedge P."/>
            <person name="McKechnie D."/>
            <person name="Finniear R."/>
            <person name="Markham A."/>
            <person name="Groffen J."/>
            <person name="Boguski M.S."/>
            <person name="Altschul S.F."/>
            <person name="Horii A.K."/>
            <person name="Ando H."/>
            <person name="Miyoshi Y."/>
            <person name="Miki Y."/>
            <person name="Nishisho I."/>
            <person name="Nakamura Y."/>
        </authorList>
    </citation>
    <scope>NUCLEOTIDE SEQUENCE [MRNA] (ISOFORM 1)</scope>
</reference>
<reference key="3">
    <citation type="journal article" date="2004" name="Cell">
        <title>RTP family members induce functional expression of mammalian odorant receptors.</title>
        <authorList>
            <person name="Saito H."/>
            <person name="Kubota M."/>
            <person name="Roberts R.W."/>
            <person name="Chi Q."/>
            <person name="Matsunami H."/>
        </authorList>
    </citation>
    <scope>NUCLEOTIDE SEQUENCE [MRNA] (ISOFORM 1)</scope>
</reference>
<reference key="4">
    <citation type="journal article" date="2004" name="Nat. Genet.">
        <title>Complete sequencing and characterization of 21,243 full-length human cDNAs.</title>
        <authorList>
            <person name="Ota T."/>
            <person name="Suzuki Y."/>
            <person name="Nishikawa T."/>
            <person name="Otsuki T."/>
            <person name="Sugiyama T."/>
            <person name="Irie R."/>
            <person name="Wakamatsu A."/>
            <person name="Hayashi K."/>
            <person name="Sato H."/>
            <person name="Nagai K."/>
            <person name="Kimura K."/>
            <person name="Makita H."/>
            <person name="Sekine M."/>
            <person name="Obayashi M."/>
            <person name="Nishi T."/>
            <person name="Shibahara T."/>
            <person name="Tanaka T."/>
            <person name="Ishii S."/>
            <person name="Yamamoto J."/>
            <person name="Saito K."/>
            <person name="Kawai Y."/>
            <person name="Isono Y."/>
            <person name="Nakamura Y."/>
            <person name="Nagahari K."/>
            <person name="Murakami K."/>
            <person name="Yasuda T."/>
            <person name="Iwayanagi T."/>
            <person name="Wagatsuma M."/>
            <person name="Shiratori A."/>
            <person name="Sudo H."/>
            <person name="Hosoiri T."/>
            <person name="Kaku Y."/>
            <person name="Kodaira H."/>
            <person name="Kondo H."/>
            <person name="Sugawara M."/>
            <person name="Takahashi M."/>
            <person name="Kanda K."/>
            <person name="Yokoi T."/>
            <person name="Furuya T."/>
            <person name="Kikkawa E."/>
            <person name="Omura Y."/>
            <person name="Abe K."/>
            <person name="Kamihara K."/>
            <person name="Katsuta N."/>
            <person name="Sato K."/>
            <person name="Tanikawa M."/>
            <person name="Yamazaki M."/>
            <person name="Ninomiya K."/>
            <person name="Ishibashi T."/>
            <person name="Yamashita H."/>
            <person name="Murakawa K."/>
            <person name="Fujimori K."/>
            <person name="Tanai H."/>
            <person name="Kimata M."/>
            <person name="Watanabe M."/>
            <person name="Hiraoka S."/>
            <person name="Chiba Y."/>
            <person name="Ishida S."/>
            <person name="Ono Y."/>
            <person name="Takiguchi S."/>
            <person name="Watanabe S."/>
            <person name="Yosida M."/>
            <person name="Hotuta T."/>
            <person name="Kusano J."/>
            <person name="Kanehori K."/>
            <person name="Takahashi-Fujii A."/>
            <person name="Hara H."/>
            <person name="Tanase T.-O."/>
            <person name="Nomura Y."/>
            <person name="Togiya S."/>
            <person name="Komai F."/>
            <person name="Hara R."/>
            <person name="Takeuchi K."/>
            <person name="Arita M."/>
            <person name="Imose N."/>
            <person name="Musashino K."/>
            <person name="Yuuki H."/>
            <person name="Oshima A."/>
            <person name="Sasaki N."/>
            <person name="Aotsuka S."/>
            <person name="Yoshikawa Y."/>
            <person name="Matsunawa H."/>
            <person name="Ichihara T."/>
            <person name="Shiohata N."/>
            <person name="Sano S."/>
            <person name="Moriya S."/>
            <person name="Momiyama H."/>
            <person name="Satoh N."/>
            <person name="Takami S."/>
            <person name="Terashima Y."/>
            <person name="Suzuki O."/>
            <person name="Nakagawa S."/>
            <person name="Senoh A."/>
            <person name="Mizoguchi H."/>
            <person name="Goto Y."/>
            <person name="Shimizu F."/>
            <person name="Wakebe H."/>
            <person name="Hishigaki H."/>
            <person name="Watanabe T."/>
            <person name="Sugiyama A."/>
            <person name="Takemoto M."/>
            <person name="Kawakami B."/>
            <person name="Yamazaki M."/>
            <person name="Watanabe K."/>
            <person name="Kumagai A."/>
            <person name="Itakura S."/>
            <person name="Fukuzumi Y."/>
            <person name="Fujimori Y."/>
            <person name="Komiyama M."/>
            <person name="Tashiro H."/>
            <person name="Tanigami A."/>
            <person name="Fujiwara T."/>
            <person name="Ono T."/>
            <person name="Yamada K."/>
            <person name="Fujii Y."/>
            <person name="Ozaki K."/>
            <person name="Hirao M."/>
            <person name="Ohmori Y."/>
            <person name="Kawabata A."/>
            <person name="Hikiji T."/>
            <person name="Kobatake N."/>
            <person name="Inagaki H."/>
            <person name="Ikema Y."/>
            <person name="Okamoto S."/>
            <person name="Okitani R."/>
            <person name="Kawakami T."/>
            <person name="Noguchi S."/>
            <person name="Itoh T."/>
            <person name="Shigeta K."/>
            <person name="Senba T."/>
            <person name="Matsumura K."/>
            <person name="Nakajima Y."/>
            <person name="Mizuno T."/>
            <person name="Morinaga M."/>
            <person name="Sasaki M."/>
            <person name="Togashi T."/>
            <person name="Oyama M."/>
            <person name="Hata H."/>
            <person name="Watanabe M."/>
            <person name="Komatsu T."/>
            <person name="Mizushima-Sugano J."/>
            <person name="Satoh T."/>
            <person name="Shirai Y."/>
            <person name="Takahashi Y."/>
            <person name="Nakagawa K."/>
            <person name="Okumura K."/>
            <person name="Nagase T."/>
            <person name="Nomura N."/>
            <person name="Kikuchi H."/>
            <person name="Masuho Y."/>
            <person name="Yamashita R."/>
            <person name="Nakai K."/>
            <person name="Yada T."/>
            <person name="Nakamura Y."/>
            <person name="Ohara O."/>
            <person name="Isogai T."/>
            <person name="Sugano S."/>
        </authorList>
    </citation>
    <scope>NUCLEOTIDE SEQUENCE [LARGE SCALE MRNA] (ISOFORM 2)</scope>
    <source>
        <tissue>Brain</tissue>
    </source>
</reference>
<reference key="5">
    <citation type="journal article" date="2004" name="Nature">
        <title>The DNA sequence and comparative analysis of human chromosome 5.</title>
        <authorList>
            <person name="Schmutz J."/>
            <person name="Martin J."/>
            <person name="Terry A."/>
            <person name="Couronne O."/>
            <person name="Grimwood J."/>
            <person name="Lowry S."/>
            <person name="Gordon L.A."/>
            <person name="Scott D."/>
            <person name="Xie G."/>
            <person name="Huang W."/>
            <person name="Hellsten U."/>
            <person name="Tran-Gyamfi M."/>
            <person name="She X."/>
            <person name="Prabhakar S."/>
            <person name="Aerts A."/>
            <person name="Altherr M."/>
            <person name="Bajorek E."/>
            <person name="Black S."/>
            <person name="Branscomb E."/>
            <person name="Caoile C."/>
            <person name="Challacombe J.F."/>
            <person name="Chan Y.M."/>
            <person name="Denys M."/>
            <person name="Detter J.C."/>
            <person name="Escobar J."/>
            <person name="Flowers D."/>
            <person name="Fotopulos D."/>
            <person name="Glavina T."/>
            <person name="Gomez M."/>
            <person name="Gonzales E."/>
            <person name="Goodstein D."/>
            <person name="Grigoriev I."/>
            <person name="Groza M."/>
            <person name="Hammon N."/>
            <person name="Hawkins T."/>
            <person name="Haydu L."/>
            <person name="Israni S."/>
            <person name="Jett J."/>
            <person name="Kadner K."/>
            <person name="Kimball H."/>
            <person name="Kobayashi A."/>
            <person name="Lopez F."/>
            <person name="Lou Y."/>
            <person name="Martinez D."/>
            <person name="Medina C."/>
            <person name="Morgan J."/>
            <person name="Nandkeshwar R."/>
            <person name="Noonan J.P."/>
            <person name="Pitluck S."/>
            <person name="Pollard M."/>
            <person name="Predki P."/>
            <person name="Priest J."/>
            <person name="Ramirez L."/>
            <person name="Retterer J."/>
            <person name="Rodriguez A."/>
            <person name="Rogers S."/>
            <person name="Salamov A."/>
            <person name="Salazar A."/>
            <person name="Thayer N."/>
            <person name="Tice H."/>
            <person name="Tsai M."/>
            <person name="Ustaszewska A."/>
            <person name="Vo N."/>
            <person name="Wheeler J."/>
            <person name="Wu K."/>
            <person name="Yang J."/>
            <person name="Dickson M."/>
            <person name="Cheng J.-F."/>
            <person name="Eichler E.E."/>
            <person name="Olsen A."/>
            <person name="Pennacchio L.A."/>
            <person name="Rokhsar D.S."/>
            <person name="Richardson P."/>
            <person name="Lucas S.M."/>
            <person name="Myers R.M."/>
            <person name="Rubin E.M."/>
        </authorList>
    </citation>
    <scope>NUCLEOTIDE SEQUENCE [LARGE SCALE GENOMIC DNA]</scope>
</reference>
<reference key="6">
    <citation type="submission" date="2005-09" db="EMBL/GenBank/DDBJ databases">
        <authorList>
            <person name="Mural R.J."/>
            <person name="Istrail S."/>
            <person name="Sutton G.G."/>
            <person name="Florea L."/>
            <person name="Halpern A.L."/>
            <person name="Mobarry C.M."/>
            <person name="Lippert R."/>
            <person name="Walenz B."/>
            <person name="Shatkay H."/>
            <person name="Dew I."/>
            <person name="Miller J.R."/>
            <person name="Flanigan M.J."/>
            <person name="Edwards N.J."/>
            <person name="Bolanos R."/>
            <person name="Fasulo D."/>
            <person name="Halldorsson B.V."/>
            <person name="Hannenhalli S."/>
            <person name="Turner R."/>
            <person name="Yooseph S."/>
            <person name="Lu F."/>
            <person name="Nusskern D.R."/>
            <person name="Shue B.C."/>
            <person name="Zheng X.H."/>
            <person name="Zhong F."/>
            <person name="Delcher A.L."/>
            <person name="Huson D.H."/>
            <person name="Kravitz S.A."/>
            <person name="Mouchard L."/>
            <person name="Reinert K."/>
            <person name="Remington K.A."/>
            <person name="Clark A.G."/>
            <person name="Waterman M.S."/>
            <person name="Eichler E.E."/>
            <person name="Adams M.D."/>
            <person name="Hunkapiller M.W."/>
            <person name="Myers E.W."/>
            <person name="Venter J.C."/>
        </authorList>
    </citation>
    <scope>NUCLEOTIDE SEQUENCE [LARGE SCALE GENOMIC DNA]</scope>
</reference>
<reference key="7">
    <citation type="journal article" date="2004" name="Genome Res.">
        <title>The status, quality, and expansion of the NIH full-length cDNA project: the Mammalian Gene Collection (MGC).</title>
        <authorList>
            <consortium name="The MGC Project Team"/>
        </authorList>
    </citation>
    <scope>NUCLEOTIDE SEQUENCE [LARGE SCALE MRNA] (ISOFORM 1)</scope>
    <source>
        <tissue>Eye</tissue>
        <tissue>Skin</tissue>
    </source>
</reference>
<reference key="8">
    <citation type="journal article" date="2006" name="J. Biol. Chem.">
        <title>Members of RTP and REEP gene families influence functional bitter taste receptor expression.</title>
        <authorList>
            <person name="Behrens M."/>
            <person name="Bartelt J."/>
            <person name="Reichling C."/>
            <person name="Winnig M."/>
            <person name="Kuhn C."/>
            <person name="Meyerhof W."/>
        </authorList>
    </citation>
    <scope>TISSUE SPECIFICITY</scope>
</reference>
<reference key="9">
    <citation type="journal article" date="2009" name="Cell">
        <title>A class of dynamin-like GTPases involved in the generation of the tubular ER network.</title>
        <authorList>
            <person name="Hu J."/>
            <person name="Shibata Y."/>
            <person name="Zhu P.-P."/>
            <person name="Voss C."/>
            <person name="Rismanchi N."/>
            <person name="Prinz W.A."/>
            <person name="Rapoport T.A."/>
            <person name="Blackstone C."/>
        </authorList>
    </citation>
    <scope>INTERACTION WITH ATL2</scope>
</reference>
<reference key="10">
    <citation type="journal article" date="2009" name="Science">
        <title>Lysine acetylation targets protein complexes and co-regulates major cellular functions.</title>
        <authorList>
            <person name="Choudhary C."/>
            <person name="Kumar C."/>
            <person name="Gnad F."/>
            <person name="Nielsen M.L."/>
            <person name="Rehman M."/>
            <person name="Walther T.C."/>
            <person name="Olsen J.V."/>
            <person name="Mann M."/>
        </authorList>
    </citation>
    <scope>IDENTIFICATION BY MASS SPECTROMETRY [LARGE SCALE ANALYSIS]</scope>
</reference>
<reference key="11">
    <citation type="journal article" date="2011" name="BMC Syst. Biol.">
        <title>Initial characterization of the human central proteome.</title>
        <authorList>
            <person name="Burkard T.R."/>
            <person name="Planyavsky M."/>
            <person name="Kaupe I."/>
            <person name="Breitwieser F.P."/>
            <person name="Buerckstuemmer T."/>
            <person name="Bennett K.L."/>
            <person name="Superti-Furga G."/>
            <person name="Colinge J."/>
        </authorList>
    </citation>
    <scope>IDENTIFICATION BY MASS SPECTROMETRY [LARGE SCALE ANALYSIS]</scope>
</reference>
<reference key="12">
    <citation type="journal article" date="2013" name="J. Proteome Res.">
        <title>Toward a comprehensive characterization of a human cancer cell phosphoproteome.</title>
        <authorList>
            <person name="Zhou H."/>
            <person name="Di Palma S."/>
            <person name="Preisinger C."/>
            <person name="Peng M."/>
            <person name="Polat A.N."/>
            <person name="Heck A.J."/>
            <person name="Mohammed S."/>
        </authorList>
    </citation>
    <scope>IDENTIFICATION BY MASS SPECTROMETRY [LARGE SCALE ANALYSIS]</scope>
    <source>
        <tissue>Cervix carcinoma</tissue>
        <tissue>Erythroleukemia</tissue>
    </source>
</reference>
<reference key="13">
    <citation type="journal article" date="2013" name="Proc. Natl. Acad. Sci. U.S.A.">
        <title>Protrudin binds atlastins and endoplasmic reticulum-shaping proteins and regulates network formation.</title>
        <authorList>
            <person name="Chang J."/>
            <person name="Lee S."/>
            <person name="Blackstone C."/>
        </authorList>
    </citation>
    <scope>SUBCELLULAR LOCATION</scope>
    <scope>INTERACTION WITH ZFYVE27</scope>
</reference>
<reference key="14">
    <citation type="journal article" date="2014" name="J. Proteomics">
        <title>An enzyme assisted RP-RPLC approach for in-depth analysis of human liver phosphoproteome.</title>
        <authorList>
            <person name="Bian Y."/>
            <person name="Song C."/>
            <person name="Cheng K."/>
            <person name="Dong M."/>
            <person name="Wang F."/>
            <person name="Huang J."/>
            <person name="Sun D."/>
            <person name="Wang L."/>
            <person name="Ye M."/>
            <person name="Zou H."/>
        </authorList>
    </citation>
    <scope>IDENTIFICATION BY MASS SPECTROMETRY [LARGE SCALE ANALYSIS]</scope>
    <source>
        <tissue>Liver</tissue>
    </source>
</reference>
<reference key="15">
    <citation type="journal article" date="2015" name="Proteomics">
        <title>N-terminome analysis of the human mitochondrial proteome.</title>
        <authorList>
            <person name="Vaca Jacome A.S."/>
            <person name="Rabilloud T."/>
            <person name="Schaeffer-Reiss C."/>
            <person name="Rompais M."/>
            <person name="Ayoub D."/>
            <person name="Lane L."/>
            <person name="Bairoch A."/>
            <person name="Van Dorsselaer A."/>
            <person name="Carapito C."/>
        </authorList>
    </citation>
    <scope>IDENTIFICATION BY MASS SPECTROMETRY [LARGE SCALE ANALYSIS]</scope>
</reference>
<reference key="16">
    <citation type="journal article" date="2020" name="Nat. Commun.">
        <title>REEP5 depletion causes sarco-endoplasmic reticulum vacuolization and cardiac functional defects.</title>
        <authorList>
            <person name="Lee S.H."/>
            <person name="Hadipour-Lakmehsari S."/>
            <person name="Murthy H.R."/>
            <person name="Gibb N."/>
            <person name="Miyake T."/>
            <person name="Teng A.C.T."/>
            <person name="Cosme J."/>
            <person name="Yu J.C."/>
            <person name="Moon M."/>
            <person name="Lim S."/>
            <person name="Wong V."/>
            <person name="Liu P."/>
            <person name="Billia F."/>
            <person name="Fernandez-Gonzalez R."/>
            <person name="Stagljar I."/>
            <person name="Sharma P."/>
            <person name="Kislinger T."/>
            <person name="Scott I.C."/>
            <person name="Gramolini A.O."/>
        </authorList>
    </citation>
    <scope>SUBUNIT</scope>
    <scope>INTERACTION WITH ATL3; CKAP4 AND RTN4</scope>
    <scope>TISSUE SPECIFICITY</scope>
    <scope>TOPOLOGY</scope>
</reference>
<feature type="chain" id="PRO_0000101815" description="Receptor expression-enhancing protein 5">
    <location>
        <begin position="1"/>
        <end position="189"/>
    </location>
</feature>
<feature type="topological domain" description="Cytoplasmic" evidence="6">
    <location>
        <begin position="1"/>
        <end position="34"/>
    </location>
</feature>
<feature type="transmembrane region" description="Helical" evidence="9">
    <location>
        <begin position="35"/>
        <end position="51"/>
    </location>
</feature>
<feature type="topological domain" description="Lumenal" evidence="9">
    <location>
        <begin position="52"/>
        <end position="53"/>
    </location>
</feature>
<feature type="transmembrane region" description="Helical" evidence="9">
    <location>
        <begin position="54"/>
        <end position="74"/>
    </location>
</feature>
<feature type="topological domain" description="Cytoplasmic" evidence="9">
    <location>
        <begin position="75"/>
        <end position="84"/>
    </location>
</feature>
<feature type="transmembrane region" description="Helical" evidence="9">
    <location>
        <begin position="85"/>
        <end position="103"/>
    </location>
</feature>
<feature type="topological domain" description="Lumenal" evidence="9">
    <location>
        <begin position="104"/>
        <end position="105"/>
    </location>
</feature>
<feature type="transmembrane region" description="Helical" evidence="9">
    <location>
        <begin position="106"/>
        <end position="123"/>
    </location>
</feature>
<feature type="topological domain" description="Cytoplasmic" evidence="6">
    <location>
        <begin position="124"/>
        <end position="189"/>
    </location>
</feature>
<feature type="region of interest" description="Required for dimerization and maintaining endoplasmic reticulum morphology" evidence="6">
    <location>
        <begin position="114"/>
        <end position="185"/>
    </location>
</feature>
<feature type="splice variant" id="VSP_056633" description="In isoform 2." evidence="7">
    <original>CGFLLWCMAPSPSNGAELLYKRIIRPFFLKHESQMDSVVKDLKDKAKETADAITKEAKKATVNLLGEEKKST</original>
    <variation>VWSGLGFLLPRCLL</variation>
    <location>
        <begin position="118"/>
        <end position="189"/>
    </location>
</feature>
<feature type="sequence conflict" description="In Ref. 2; AAA66351." evidence="8" ref="2">
    <original>M</original>
    <variation>I</variation>
    <location>
        <position position="115"/>
    </location>
</feature>
<feature type="sequence conflict" description="In Ref. 1; AAA60136." evidence="8" ref="1">
    <original>A</original>
    <variation>S</variation>
    <location>
        <position position="163"/>
    </location>
</feature>
<keyword id="KW-0025">Alternative splicing</keyword>
<keyword id="KW-0256">Endoplasmic reticulum</keyword>
<keyword id="KW-0472">Membrane</keyword>
<keyword id="KW-1267">Proteomics identification</keyword>
<keyword id="KW-1185">Reference proteome</keyword>
<keyword id="KW-0703">Sarcoplasmic reticulum</keyword>
<keyword id="KW-0812">Transmembrane</keyword>
<keyword id="KW-1133">Transmembrane helix</keyword>
<accession>Q00765</accession>
<accession>B7Z681</accession>
<accession>D3DT04</accession>
<accession>Q04198</accession>
<accession>Q5QGT0</accession>
<accession>Q9BWH9</accession>
<proteinExistence type="evidence at protein level"/>
<comment type="function">
    <text evidence="1">Plays an essential role in heart function and development by regulating the organization and function of the sarcoplasmic reticulum in cardiomyocytes.</text>
</comment>
<comment type="subunit">
    <text evidence="1 4 5 6">Monomer (PubMed:32075961). Homodimer; maybe disulfide-linked (PubMed:32075961). Homotrimer (By similarity). Interacts with ATL1 (By similarity). Interacts with ATL2 (PubMed:19665976). Interacts with ATL3 (PubMed:32075961). Interacts with CKAP4 (PubMed:32075961). Interacts with RTN4 (isoforms A and B) (PubMed:32075961). Interacts with ZFYVE27 (PubMed:23969831).</text>
</comment>
<comment type="interaction">
    <interactant intactId="EBI-1549827">
        <id>Q00765</id>
    </interactant>
    <interactant intactId="EBI-7131019">
        <id>Q8TB40</id>
        <label>ABHD4</label>
    </interactant>
    <organismsDiffer>false</organismsDiffer>
    <experiments>3</experiments>
</comment>
<comment type="interaction">
    <interactant intactId="EBI-1549827">
        <id>Q00765</id>
    </interactant>
    <interactant intactId="EBI-638194">
        <id>P53365</id>
        <label>ARFIP2</label>
    </interactant>
    <organismsDiffer>false</organismsDiffer>
    <experiments>3</experiments>
</comment>
<comment type="interaction">
    <interactant intactId="EBI-1549827">
        <id>Q00765</id>
    </interactant>
    <interactant intactId="EBI-1549822">
        <id>Q6P1Q0</id>
        <label>LETMD1</label>
    </interactant>
    <organismsDiffer>false</organismsDiffer>
    <experiments>3</experiments>
</comment>
<comment type="interaction">
    <interactant intactId="EBI-1549827">
        <id>Q00765</id>
    </interactant>
    <interactant intactId="EBI-741171">
        <id>Q96AL5</id>
        <label>PBX3</label>
    </interactant>
    <organismsDiffer>false</organismsDiffer>
    <experiments>3</experiments>
</comment>
<comment type="interaction">
    <interactant intactId="EBI-1549827">
        <id>Q00765</id>
    </interactant>
    <interactant intactId="EBI-14223623">
        <id>Q9UKF7-2</id>
        <label>PITPNC1</label>
    </interactant>
    <organismsDiffer>false</organismsDiffer>
    <experiments>3</experiments>
</comment>
<comment type="interaction">
    <interactant intactId="EBI-1549827">
        <id>Q00765</id>
    </interactant>
    <interactant intactId="EBI-712367">
        <id>Q9UI14</id>
        <label>RABAC1</label>
    </interactant>
    <organismsDiffer>false</organismsDiffer>
    <experiments>6</experiments>
</comment>
<comment type="interaction">
    <interactant intactId="EBI-1549827">
        <id>Q00765</id>
    </interactant>
    <interactant intactId="EBI-2822329">
        <id>Q13596</id>
        <label>SNX1</label>
    </interactant>
    <organismsDiffer>false</organismsDiffer>
    <experiments>3</experiments>
</comment>
<comment type="interaction">
    <interactant intactId="EBI-1549827">
        <id>Q00765</id>
    </interactant>
    <interactant intactId="EBI-3892947">
        <id>Q5T4F4</id>
        <label>ZFYVE27</label>
    </interactant>
    <organismsDiffer>false</organismsDiffer>
    <experiments>4</experiments>
</comment>
<comment type="subcellular location">
    <subcellularLocation>
        <location evidence="5">Endoplasmic reticulum membrane</location>
        <topology evidence="2">Multi-pass membrane protein</topology>
    </subcellularLocation>
    <subcellularLocation>
        <location evidence="1">Sarcoplasmic reticulum membrane</location>
        <topology evidence="2">Multi-pass membrane protein</topology>
    </subcellularLocation>
    <text evidence="1 5">Localizes to endoplasmic reticulum tubular network (PubMed:23969831). In cardiomyocytes, localizes to the junctional sarcoplasmic reticulum membrane which is closely tethered to the cell membrane and contractile machinery (By similarity).</text>
</comment>
<comment type="alternative products">
    <event type="alternative splicing"/>
    <isoform>
        <id>Q00765-1</id>
        <name>1</name>
        <sequence type="displayed"/>
    </isoform>
    <isoform>
        <id>Q00765-2</id>
        <name>2</name>
        <sequence type="described" ref="VSP_056633"/>
    </isoform>
</comment>
<comment type="tissue specificity">
    <text evidence="3 6">Expressed in heart (at protein level) (PubMed:32075961). Expressed in circumvallate papillae and testis (PubMed:16720576).</text>
</comment>
<comment type="domain">
    <text evidence="9">The short lumenal loops between transmembrane domains 1 and 2 and between transmembrane domains 3 and 4 may impart a wedge-like configuration, thus deforming membranes.</text>
</comment>
<comment type="similarity">
    <text evidence="8">Belongs to the DP1 family.</text>
</comment>
<comment type="sequence caution" evidence="8">
    <conflict type="erroneous initiation">
        <sequence resource="EMBL-CDS" id="AAA60136"/>
    </conflict>
</comment>
<comment type="sequence caution" evidence="8">
    <conflict type="erroneous initiation">
        <sequence resource="EMBL-CDS" id="AAA66351"/>
    </conflict>
</comment>
<comment type="sequence caution" evidence="8">
    <conflict type="erroneous initiation">
        <sequence resource="EMBL-CDS" id="AAH65926"/>
    </conflict>
</comment>
<protein>
    <recommendedName>
        <fullName>Receptor expression-enhancing protein 5</fullName>
    </recommendedName>
    <alternativeName>
        <fullName>Polyposis locus protein 1</fullName>
    </alternativeName>
    <alternativeName>
        <fullName>Protein TB2</fullName>
    </alternativeName>
</protein>
<gene>
    <name type="primary">REEP5</name>
    <name type="synonym">C5orf18</name>
    <name type="synonym">DP1</name>
    <name type="synonym">TB2</name>
</gene>